<accession>Q4UYG4</accession>
<reference key="1">
    <citation type="journal article" date="2005" name="Genome Res.">
        <title>Comparative and functional genomic analyses of the pathogenicity of phytopathogen Xanthomonas campestris pv. campestris.</title>
        <authorList>
            <person name="Qian W."/>
            <person name="Jia Y."/>
            <person name="Ren S.-X."/>
            <person name="He Y.-Q."/>
            <person name="Feng J.-X."/>
            <person name="Lu L.-F."/>
            <person name="Sun Q."/>
            <person name="Ying G."/>
            <person name="Tang D.-J."/>
            <person name="Tang H."/>
            <person name="Wu W."/>
            <person name="Hao P."/>
            <person name="Wang L."/>
            <person name="Jiang B.-L."/>
            <person name="Zeng S."/>
            <person name="Gu W.-Y."/>
            <person name="Lu G."/>
            <person name="Rong L."/>
            <person name="Tian Y."/>
            <person name="Yao Z."/>
            <person name="Fu G."/>
            <person name="Chen B."/>
            <person name="Fang R."/>
            <person name="Qiang B."/>
            <person name="Chen Z."/>
            <person name="Zhao G.-P."/>
            <person name="Tang J.-L."/>
            <person name="He C."/>
        </authorList>
    </citation>
    <scope>NUCLEOTIDE SEQUENCE [LARGE SCALE GENOMIC DNA]</scope>
    <source>
        <strain>8004</strain>
    </source>
</reference>
<proteinExistence type="inferred from homology"/>
<keyword id="KW-0028">Amino-acid biosynthesis</keyword>
<keyword id="KW-0100">Branched-chain amino acid biosynthesis</keyword>
<keyword id="KW-0432">Leucine biosynthesis</keyword>
<keyword id="KW-0456">Lyase</keyword>
<organism>
    <name type="scientific">Xanthomonas campestris pv. campestris (strain 8004)</name>
    <dbReference type="NCBI Taxonomy" id="314565"/>
    <lineage>
        <taxon>Bacteria</taxon>
        <taxon>Pseudomonadati</taxon>
        <taxon>Pseudomonadota</taxon>
        <taxon>Gammaproteobacteria</taxon>
        <taxon>Lysobacterales</taxon>
        <taxon>Lysobacteraceae</taxon>
        <taxon>Xanthomonas</taxon>
    </lineage>
</organism>
<gene>
    <name evidence="1" type="primary">leuD</name>
    <name type="ordered locus">XC_0834</name>
</gene>
<protein>
    <recommendedName>
        <fullName evidence="1">3-isopropylmalate dehydratase small subunit</fullName>
        <ecNumber evidence="1">4.2.1.33</ecNumber>
    </recommendedName>
    <alternativeName>
        <fullName evidence="1">Alpha-IPM isomerase</fullName>
        <shortName evidence="1">IPMI</shortName>
    </alternativeName>
    <alternativeName>
        <fullName evidence="1">Isopropylmalate isomerase</fullName>
    </alternativeName>
</protein>
<dbReference type="EC" id="4.2.1.33" evidence="1"/>
<dbReference type="EMBL" id="CP000050">
    <property type="protein sequence ID" value="AAY47909.1"/>
    <property type="molecule type" value="Genomic_DNA"/>
</dbReference>
<dbReference type="RefSeq" id="WP_011038429.1">
    <property type="nucleotide sequence ID" value="NZ_CP155948.1"/>
</dbReference>
<dbReference type="SMR" id="Q4UYG4"/>
<dbReference type="KEGG" id="xcb:XC_0834"/>
<dbReference type="HOGENOM" id="CLU_081378_0_3_6"/>
<dbReference type="UniPathway" id="UPA00048">
    <property type="reaction ID" value="UER00071"/>
</dbReference>
<dbReference type="Proteomes" id="UP000000420">
    <property type="component" value="Chromosome"/>
</dbReference>
<dbReference type="GO" id="GO:0009316">
    <property type="term" value="C:3-isopropylmalate dehydratase complex"/>
    <property type="evidence" value="ECO:0007669"/>
    <property type="project" value="InterPro"/>
</dbReference>
<dbReference type="GO" id="GO:0003861">
    <property type="term" value="F:3-isopropylmalate dehydratase activity"/>
    <property type="evidence" value="ECO:0007669"/>
    <property type="project" value="UniProtKB-UniRule"/>
</dbReference>
<dbReference type="GO" id="GO:0009098">
    <property type="term" value="P:L-leucine biosynthetic process"/>
    <property type="evidence" value="ECO:0007669"/>
    <property type="project" value="UniProtKB-UniRule"/>
</dbReference>
<dbReference type="CDD" id="cd01577">
    <property type="entry name" value="IPMI_Swivel"/>
    <property type="match status" value="1"/>
</dbReference>
<dbReference type="FunFam" id="3.20.19.10:FF:000003">
    <property type="entry name" value="3-isopropylmalate dehydratase small subunit"/>
    <property type="match status" value="1"/>
</dbReference>
<dbReference type="Gene3D" id="3.20.19.10">
    <property type="entry name" value="Aconitase, domain 4"/>
    <property type="match status" value="1"/>
</dbReference>
<dbReference type="HAMAP" id="MF_01031">
    <property type="entry name" value="LeuD_type1"/>
    <property type="match status" value="1"/>
</dbReference>
<dbReference type="InterPro" id="IPR004431">
    <property type="entry name" value="3-IsopropMal_deHydase_ssu"/>
</dbReference>
<dbReference type="InterPro" id="IPR015928">
    <property type="entry name" value="Aconitase/3IPM_dehydase_swvl"/>
</dbReference>
<dbReference type="InterPro" id="IPR000573">
    <property type="entry name" value="AconitaseA/IPMdHydase_ssu_swvl"/>
</dbReference>
<dbReference type="InterPro" id="IPR033940">
    <property type="entry name" value="IPMI_Swivel"/>
</dbReference>
<dbReference type="InterPro" id="IPR050075">
    <property type="entry name" value="LeuD"/>
</dbReference>
<dbReference type="NCBIfam" id="TIGR00171">
    <property type="entry name" value="leuD"/>
    <property type="match status" value="1"/>
</dbReference>
<dbReference type="NCBIfam" id="NF002458">
    <property type="entry name" value="PRK01641.1"/>
    <property type="match status" value="1"/>
</dbReference>
<dbReference type="PANTHER" id="PTHR43345:SF5">
    <property type="entry name" value="3-ISOPROPYLMALATE DEHYDRATASE SMALL SUBUNIT"/>
    <property type="match status" value="1"/>
</dbReference>
<dbReference type="PANTHER" id="PTHR43345">
    <property type="entry name" value="3-ISOPROPYLMALATE DEHYDRATASE SMALL SUBUNIT 2-RELATED-RELATED"/>
    <property type="match status" value="1"/>
</dbReference>
<dbReference type="Pfam" id="PF00694">
    <property type="entry name" value="Aconitase_C"/>
    <property type="match status" value="1"/>
</dbReference>
<dbReference type="SUPFAM" id="SSF52016">
    <property type="entry name" value="LeuD/IlvD-like"/>
    <property type="match status" value="1"/>
</dbReference>
<comment type="function">
    <text evidence="1">Catalyzes the isomerization between 2-isopropylmalate and 3-isopropylmalate, via the formation of 2-isopropylmaleate.</text>
</comment>
<comment type="catalytic activity">
    <reaction evidence="1">
        <text>(2R,3S)-3-isopropylmalate = (2S)-2-isopropylmalate</text>
        <dbReference type="Rhea" id="RHEA:32287"/>
        <dbReference type="ChEBI" id="CHEBI:1178"/>
        <dbReference type="ChEBI" id="CHEBI:35121"/>
        <dbReference type="EC" id="4.2.1.33"/>
    </reaction>
</comment>
<comment type="pathway">
    <text evidence="1">Amino-acid biosynthesis; L-leucine biosynthesis; L-leucine from 3-methyl-2-oxobutanoate: step 2/4.</text>
</comment>
<comment type="subunit">
    <text evidence="1">Heterodimer of LeuC and LeuD.</text>
</comment>
<comment type="similarity">
    <text evidence="1">Belongs to the LeuD family. LeuD type 1 subfamily.</text>
</comment>
<feature type="chain" id="PRO_0000141912" description="3-isopropylmalate dehydratase small subunit">
    <location>
        <begin position="1"/>
        <end position="215"/>
    </location>
</feature>
<evidence type="ECO:0000255" key="1">
    <source>
        <dbReference type="HAMAP-Rule" id="MF_01031"/>
    </source>
</evidence>
<name>LEUD_XANC8</name>
<sequence>MTPFTQHTGLVAPLDRANVDTDQIIPKQFLKSIKRTGFGPNLFDEWRYLDIGEPGRDNSTRPLNQEFVLNFPRYQGASVLLARENFGCGSSREHAPWALDEYGFRAVIAPSFADIFYNNSFKNGLLPIVLAEAEMDALFEQCLGNEGYQLTVDLAAQRVRRPDGVEYAFEIDAFRKHCLLNGLDDIGLTLQDADAIGRFEQGHRAQQPWLFGALQ</sequence>